<sequence>MSAIAPGMILIAYLCGSISSAILVCRLCGLPDPRTSGSGNPGATNVLRIGGKGAAVAVLIFDVLKGMLPVWGAYELGVSPFWLGLIAIAACLGHIWPVFFGFKGGKGVATAFGAIAPISWDLTGVMAGTWLLTVLLSGYSSLGAIVSALIAPFYVWWFKPQFTFPVSMLSCLILLRHHDNIQRLWRRQETKIWTKFKRKREKDPE</sequence>
<feature type="chain" id="PRO_0000188446" description="Glycerol-3-phosphate acyltransferase">
    <location>
        <begin position="1"/>
        <end position="205"/>
    </location>
</feature>
<feature type="topological domain" description="Periplasmic" evidence="1">
    <location>
        <begin position="1"/>
        <end position="3"/>
    </location>
</feature>
<feature type="transmembrane region" description="Helical" evidence="1">
    <location>
        <begin position="4"/>
        <end position="24"/>
    </location>
</feature>
<feature type="topological domain" description="Cytoplasmic" evidence="1">
    <location>
        <begin position="25"/>
        <end position="52"/>
    </location>
</feature>
<feature type="transmembrane region" description="Helical" evidence="1">
    <location>
        <begin position="53"/>
        <end position="73"/>
    </location>
</feature>
<feature type="topological domain" description="Periplasmic" evidence="1">
    <location>
        <begin position="74"/>
        <end position="80"/>
    </location>
</feature>
<feature type="transmembrane region" description="Helical" evidence="1">
    <location>
        <begin position="81"/>
        <end position="101"/>
    </location>
</feature>
<feature type="topological domain" description="Cytoplasmic" evidence="1">
    <location>
        <begin position="102"/>
        <end position="111"/>
    </location>
</feature>
<feature type="transmembrane region" description="Helical" evidence="1">
    <location>
        <begin position="112"/>
        <end position="132"/>
    </location>
</feature>
<feature type="topological domain" description="Periplasmic" evidence="1">
    <location>
        <begin position="133"/>
        <end position="137"/>
    </location>
</feature>
<feature type="transmembrane region" description="Helical" evidence="1">
    <location>
        <begin position="138"/>
        <end position="158"/>
    </location>
</feature>
<feature type="topological domain" description="Cytoplasmic" evidence="1">
    <location>
        <begin position="159"/>
        <end position="205"/>
    </location>
</feature>
<dbReference type="EC" id="2.3.1.15" evidence="1"/>
<dbReference type="EC" id="2.3.1.n5" evidence="1"/>
<dbReference type="EMBL" id="AE005674">
    <property type="protein sequence ID" value="AAN44576.1"/>
    <property type="molecule type" value="Genomic_DNA"/>
</dbReference>
<dbReference type="EMBL" id="AE014073">
    <property type="protein sequence ID" value="AAP18388.1"/>
    <property type="molecule type" value="Genomic_DNA"/>
</dbReference>
<dbReference type="RefSeq" id="NP_708869.1">
    <property type="nucleotide sequence ID" value="NC_004337.2"/>
</dbReference>
<dbReference type="RefSeq" id="WP_001272798.1">
    <property type="nucleotide sequence ID" value="NZ_WPGW01000061.1"/>
</dbReference>
<dbReference type="SMR" id="P59252"/>
<dbReference type="STRING" id="198214.SF3100"/>
<dbReference type="PaxDb" id="198214-SF3100"/>
<dbReference type="GeneID" id="1026683"/>
<dbReference type="KEGG" id="sfl:SF3100"/>
<dbReference type="KEGG" id="sfx:S3305"/>
<dbReference type="PATRIC" id="fig|198214.7.peg.3678"/>
<dbReference type="HOGENOM" id="CLU_081254_0_2_6"/>
<dbReference type="UniPathway" id="UPA00085"/>
<dbReference type="Proteomes" id="UP000001006">
    <property type="component" value="Chromosome"/>
</dbReference>
<dbReference type="Proteomes" id="UP000002673">
    <property type="component" value="Chromosome"/>
</dbReference>
<dbReference type="GO" id="GO:0005886">
    <property type="term" value="C:plasma membrane"/>
    <property type="evidence" value="ECO:0007669"/>
    <property type="project" value="UniProtKB-SubCell"/>
</dbReference>
<dbReference type="GO" id="GO:0043772">
    <property type="term" value="F:acyl-phosphate glycerol-3-phosphate acyltransferase activity"/>
    <property type="evidence" value="ECO:0007669"/>
    <property type="project" value="InterPro"/>
</dbReference>
<dbReference type="GO" id="GO:0004366">
    <property type="term" value="F:glycerol-3-phosphate O-acyltransferase activity"/>
    <property type="evidence" value="ECO:0007669"/>
    <property type="project" value="UniProtKB-UniRule"/>
</dbReference>
<dbReference type="GO" id="GO:0008654">
    <property type="term" value="P:phospholipid biosynthetic process"/>
    <property type="evidence" value="ECO:0007669"/>
    <property type="project" value="UniProtKB-UniRule"/>
</dbReference>
<dbReference type="HAMAP" id="MF_01043">
    <property type="entry name" value="PlsY"/>
    <property type="match status" value="1"/>
</dbReference>
<dbReference type="InterPro" id="IPR003811">
    <property type="entry name" value="G3P_acylTferase_PlsY"/>
</dbReference>
<dbReference type="NCBIfam" id="TIGR00023">
    <property type="entry name" value="glycerol-3-phosphate 1-O-acyltransferase PlsY"/>
    <property type="match status" value="1"/>
</dbReference>
<dbReference type="PANTHER" id="PTHR30309:SF0">
    <property type="entry name" value="GLYCEROL-3-PHOSPHATE ACYLTRANSFERASE-RELATED"/>
    <property type="match status" value="1"/>
</dbReference>
<dbReference type="PANTHER" id="PTHR30309">
    <property type="entry name" value="INNER MEMBRANE PROTEIN YGIH"/>
    <property type="match status" value="1"/>
</dbReference>
<dbReference type="Pfam" id="PF02660">
    <property type="entry name" value="G3P_acyltransf"/>
    <property type="match status" value="1"/>
</dbReference>
<dbReference type="SMART" id="SM01207">
    <property type="entry name" value="G3P_acyltransf"/>
    <property type="match status" value="1"/>
</dbReference>
<protein>
    <recommendedName>
        <fullName evidence="1">Glycerol-3-phosphate acyltransferase</fullName>
    </recommendedName>
    <alternativeName>
        <fullName evidence="1">G3P acyltransferase</fullName>
        <shortName evidence="1">GPAT</shortName>
        <ecNumber evidence="1">2.3.1.15</ecNumber>
        <ecNumber evidence="1">2.3.1.n5</ecNumber>
    </alternativeName>
    <alternativeName>
        <fullName evidence="1">Lysophosphatidic acid synthase</fullName>
        <shortName evidence="1">LPA synthase</shortName>
    </alternativeName>
</protein>
<gene>
    <name evidence="1" type="primary">plsY</name>
    <name type="synonym">ygiH</name>
    <name type="ordered locus">SF3100</name>
    <name type="ordered locus">S3305</name>
</gene>
<accession>P59252</accession>
<keyword id="KW-0997">Cell inner membrane</keyword>
<keyword id="KW-1003">Cell membrane</keyword>
<keyword id="KW-0444">Lipid biosynthesis</keyword>
<keyword id="KW-0443">Lipid metabolism</keyword>
<keyword id="KW-0472">Membrane</keyword>
<keyword id="KW-0594">Phospholipid biosynthesis</keyword>
<keyword id="KW-1208">Phospholipid metabolism</keyword>
<keyword id="KW-1185">Reference proteome</keyword>
<keyword id="KW-0808">Transferase</keyword>
<keyword id="KW-0812">Transmembrane</keyword>
<keyword id="KW-1133">Transmembrane helix</keyword>
<evidence type="ECO:0000255" key="1">
    <source>
        <dbReference type="HAMAP-Rule" id="MF_01043"/>
    </source>
</evidence>
<comment type="function">
    <text evidence="1">Catalyzes the transfer of an acyl group from acyl-ACP to glycerol-3-phosphate (G3P) to form lysophosphatidic acid (LPA). This enzyme can also utilize acyl-CoA as fatty acyl donor, but not acyl-PO(4).</text>
</comment>
<comment type="catalytic activity">
    <reaction evidence="1">
        <text>sn-glycerol 3-phosphate + an acyl-CoA = a 1-acyl-sn-glycero-3-phosphate + CoA</text>
        <dbReference type="Rhea" id="RHEA:15325"/>
        <dbReference type="ChEBI" id="CHEBI:57287"/>
        <dbReference type="ChEBI" id="CHEBI:57597"/>
        <dbReference type="ChEBI" id="CHEBI:57970"/>
        <dbReference type="ChEBI" id="CHEBI:58342"/>
        <dbReference type="EC" id="2.3.1.15"/>
    </reaction>
</comment>
<comment type="catalytic activity">
    <reaction evidence="1">
        <text>a fatty acyl-[ACP] + sn-glycerol 3-phosphate = a 1-acyl-sn-glycero-3-phosphate + holo-[ACP]</text>
        <dbReference type="Rhea" id="RHEA:42300"/>
        <dbReference type="Rhea" id="RHEA-COMP:9685"/>
        <dbReference type="Rhea" id="RHEA-COMP:14125"/>
        <dbReference type="ChEBI" id="CHEBI:57597"/>
        <dbReference type="ChEBI" id="CHEBI:57970"/>
        <dbReference type="ChEBI" id="CHEBI:64479"/>
        <dbReference type="ChEBI" id="CHEBI:138651"/>
        <dbReference type="EC" id="2.3.1.n5"/>
    </reaction>
</comment>
<comment type="pathway">
    <text evidence="1">Lipid metabolism; phospholipid metabolism.</text>
</comment>
<comment type="subunit">
    <text evidence="1">Probably interacts with PlsX.</text>
</comment>
<comment type="subcellular location">
    <subcellularLocation>
        <location evidence="1">Cell inner membrane</location>
        <topology evidence="1">Multi-pass membrane protein</topology>
    </subcellularLocation>
</comment>
<comment type="similarity">
    <text evidence="1">Belongs to the PlsY family.</text>
</comment>
<organism>
    <name type="scientific">Shigella flexneri</name>
    <dbReference type="NCBI Taxonomy" id="623"/>
    <lineage>
        <taxon>Bacteria</taxon>
        <taxon>Pseudomonadati</taxon>
        <taxon>Pseudomonadota</taxon>
        <taxon>Gammaproteobacteria</taxon>
        <taxon>Enterobacterales</taxon>
        <taxon>Enterobacteriaceae</taxon>
        <taxon>Shigella</taxon>
    </lineage>
</organism>
<name>PLSY_SHIFL</name>
<proteinExistence type="inferred from homology"/>
<reference key="1">
    <citation type="journal article" date="2002" name="Nucleic Acids Res.">
        <title>Genome sequence of Shigella flexneri 2a: insights into pathogenicity through comparison with genomes of Escherichia coli K12 and O157.</title>
        <authorList>
            <person name="Jin Q."/>
            <person name="Yuan Z."/>
            <person name="Xu J."/>
            <person name="Wang Y."/>
            <person name="Shen Y."/>
            <person name="Lu W."/>
            <person name="Wang J."/>
            <person name="Liu H."/>
            <person name="Yang J."/>
            <person name="Yang F."/>
            <person name="Zhang X."/>
            <person name="Zhang J."/>
            <person name="Yang G."/>
            <person name="Wu H."/>
            <person name="Qu D."/>
            <person name="Dong J."/>
            <person name="Sun L."/>
            <person name="Xue Y."/>
            <person name="Zhao A."/>
            <person name="Gao Y."/>
            <person name="Zhu J."/>
            <person name="Kan B."/>
            <person name="Ding K."/>
            <person name="Chen S."/>
            <person name="Cheng H."/>
            <person name="Yao Z."/>
            <person name="He B."/>
            <person name="Chen R."/>
            <person name="Ma D."/>
            <person name="Qiang B."/>
            <person name="Wen Y."/>
            <person name="Hou Y."/>
            <person name="Yu J."/>
        </authorList>
    </citation>
    <scope>NUCLEOTIDE SEQUENCE [LARGE SCALE GENOMIC DNA]</scope>
    <source>
        <strain>301 / Serotype 2a</strain>
    </source>
</reference>
<reference key="2">
    <citation type="journal article" date="2003" name="Infect. Immun.">
        <title>Complete genome sequence and comparative genomics of Shigella flexneri serotype 2a strain 2457T.</title>
        <authorList>
            <person name="Wei J."/>
            <person name="Goldberg M.B."/>
            <person name="Burland V."/>
            <person name="Venkatesan M.M."/>
            <person name="Deng W."/>
            <person name="Fournier G."/>
            <person name="Mayhew G.F."/>
            <person name="Plunkett G. III"/>
            <person name="Rose D.J."/>
            <person name="Darling A."/>
            <person name="Mau B."/>
            <person name="Perna N.T."/>
            <person name="Payne S.M."/>
            <person name="Runyen-Janecky L.J."/>
            <person name="Zhou S."/>
            <person name="Schwartz D.C."/>
            <person name="Blattner F.R."/>
        </authorList>
    </citation>
    <scope>NUCLEOTIDE SEQUENCE [LARGE SCALE GENOMIC DNA]</scope>
    <source>
        <strain>ATCC 700930 / 2457T / Serotype 2a</strain>
    </source>
</reference>